<dbReference type="EC" id="6.3.2.6" evidence="1"/>
<dbReference type="EMBL" id="CP000383">
    <property type="protein sequence ID" value="ABG59178.1"/>
    <property type="molecule type" value="Genomic_DNA"/>
</dbReference>
<dbReference type="RefSeq" id="WP_011585295.1">
    <property type="nucleotide sequence ID" value="NC_008255.1"/>
</dbReference>
<dbReference type="SMR" id="Q11TT6"/>
<dbReference type="STRING" id="269798.CHU_1912"/>
<dbReference type="KEGG" id="chu:CHU_1912"/>
<dbReference type="eggNOG" id="COG0152">
    <property type="taxonomic scope" value="Bacteria"/>
</dbReference>
<dbReference type="HOGENOM" id="CLU_045637_0_1_10"/>
<dbReference type="OrthoDB" id="9801549at2"/>
<dbReference type="UniPathway" id="UPA00074">
    <property type="reaction ID" value="UER00131"/>
</dbReference>
<dbReference type="Proteomes" id="UP000001822">
    <property type="component" value="Chromosome"/>
</dbReference>
<dbReference type="GO" id="GO:0005737">
    <property type="term" value="C:cytoplasm"/>
    <property type="evidence" value="ECO:0007669"/>
    <property type="project" value="TreeGrafter"/>
</dbReference>
<dbReference type="GO" id="GO:0005524">
    <property type="term" value="F:ATP binding"/>
    <property type="evidence" value="ECO:0007669"/>
    <property type="project" value="UniProtKB-KW"/>
</dbReference>
<dbReference type="GO" id="GO:0004639">
    <property type="term" value="F:phosphoribosylaminoimidazolesuccinocarboxamide synthase activity"/>
    <property type="evidence" value="ECO:0007669"/>
    <property type="project" value="UniProtKB-UniRule"/>
</dbReference>
<dbReference type="GO" id="GO:0006189">
    <property type="term" value="P:'de novo' IMP biosynthetic process"/>
    <property type="evidence" value="ECO:0007669"/>
    <property type="project" value="UniProtKB-UniRule"/>
</dbReference>
<dbReference type="CDD" id="cd01414">
    <property type="entry name" value="SAICAR_synt_Sc"/>
    <property type="match status" value="1"/>
</dbReference>
<dbReference type="FunFam" id="3.30.200.20:FF:000199">
    <property type="entry name" value="Phosphoribosylaminoimidazole-succinocarboxamide synthase"/>
    <property type="match status" value="1"/>
</dbReference>
<dbReference type="Gene3D" id="3.30.470.20">
    <property type="entry name" value="ATP-grasp fold, B domain"/>
    <property type="match status" value="1"/>
</dbReference>
<dbReference type="Gene3D" id="3.30.200.20">
    <property type="entry name" value="Phosphorylase Kinase, domain 1"/>
    <property type="match status" value="1"/>
</dbReference>
<dbReference type="HAMAP" id="MF_00137">
    <property type="entry name" value="SAICAR_synth"/>
    <property type="match status" value="1"/>
</dbReference>
<dbReference type="InterPro" id="IPR028923">
    <property type="entry name" value="SAICAR_synt/ADE2_N"/>
</dbReference>
<dbReference type="InterPro" id="IPR018236">
    <property type="entry name" value="SAICAR_synthetase_CS"/>
</dbReference>
<dbReference type="NCBIfam" id="NF009251">
    <property type="entry name" value="PRK12607.1"/>
    <property type="match status" value="1"/>
</dbReference>
<dbReference type="PANTHER" id="PTHR43700">
    <property type="entry name" value="PHOSPHORIBOSYLAMINOIMIDAZOLE-SUCCINOCARBOXAMIDE SYNTHASE"/>
    <property type="match status" value="1"/>
</dbReference>
<dbReference type="PANTHER" id="PTHR43700:SF1">
    <property type="entry name" value="PHOSPHORIBOSYLAMINOIMIDAZOLE-SUCCINOCARBOXAMIDE SYNTHASE"/>
    <property type="match status" value="1"/>
</dbReference>
<dbReference type="Pfam" id="PF01259">
    <property type="entry name" value="SAICAR_synt"/>
    <property type="match status" value="1"/>
</dbReference>
<dbReference type="SUPFAM" id="SSF56104">
    <property type="entry name" value="SAICAR synthase-like"/>
    <property type="match status" value="1"/>
</dbReference>
<dbReference type="PROSITE" id="PS01058">
    <property type="entry name" value="SAICAR_SYNTHETASE_2"/>
    <property type="match status" value="1"/>
</dbReference>
<keyword id="KW-0067">ATP-binding</keyword>
<keyword id="KW-0436">Ligase</keyword>
<keyword id="KW-0547">Nucleotide-binding</keyword>
<keyword id="KW-0658">Purine biosynthesis</keyword>
<keyword id="KW-1185">Reference proteome</keyword>
<reference key="1">
    <citation type="journal article" date="2007" name="Appl. Environ. Microbiol.">
        <title>Genome sequence of the cellulolytic gliding bacterium Cytophaga hutchinsonii.</title>
        <authorList>
            <person name="Xie G."/>
            <person name="Bruce D.C."/>
            <person name="Challacombe J.F."/>
            <person name="Chertkov O."/>
            <person name="Detter J.C."/>
            <person name="Gilna P."/>
            <person name="Han C.S."/>
            <person name="Lucas S."/>
            <person name="Misra M."/>
            <person name="Myers G.L."/>
            <person name="Richardson P."/>
            <person name="Tapia R."/>
            <person name="Thayer N."/>
            <person name="Thompson L.S."/>
            <person name="Brettin T.S."/>
            <person name="Henrissat B."/>
            <person name="Wilson D.B."/>
            <person name="McBride M.J."/>
        </authorList>
    </citation>
    <scope>NUCLEOTIDE SEQUENCE [LARGE SCALE GENOMIC DNA]</scope>
    <source>
        <strain>ATCC 33406 / DSM 1761 / JCM 20678 / CIP 103989 / IAM 12607 / NBRC 15051 / NCIMB 9469 / D465</strain>
    </source>
</reference>
<protein>
    <recommendedName>
        <fullName evidence="1">Phosphoribosylaminoimidazole-succinocarboxamide synthase</fullName>
        <ecNumber evidence="1">6.3.2.6</ecNumber>
    </recommendedName>
    <alternativeName>
        <fullName evidence="1">SAICAR synthetase</fullName>
    </alternativeName>
</protein>
<accession>Q11TT6</accession>
<gene>
    <name evidence="1" type="primary">purC</name>
    <name type="ordered locus">CHU_1912</name>
</gene>
<proteinExistence type="inferred from homology"/>
<evidence type="ECO:0000255" key="1">
    <source>
        <dbReference type="HAMAP-Rule" id="MF_00137"/>
    </source>
</evidence>
<name>PUR7_CYTH3</name>
<feature type="chain" id="PRO_1000018696" description="Phosphoribosylaminoimidazole-succinocarboxamide synthase">
    <location>
        <begin position="1"/>
        <end position="310"/>
    </location>
</feature>
<comment type="catalytic activity">
    <reaction evidence="1">
        <text>5-amino-1-(5-phospho-D-ribosyl)imidazole-4-carboxylate + L-aspartate + ATP = (2S)-2-[5-amino-1-(5-phospho-beta-D-ribosyl)imidazole-4-carboxamido]succinate + ADP + phosphate + 2 H(+)</text>
        <dbReference type="Rhea" id="RHEA:22628"/>
        <dbReference type="ChEBI" id="CHEBI:15378"/>
        <dbReference type="ChEBI" id="CHEBI:29991"/>
        <dbReference type="ChEBI" id="CHEBI:30616"/>
        <dbReference type="ChEBI" id="CHEBI:43474"/>
        <dbReference type="ChEBI" id="CHEBI:58443"/>
        <dbReference type="ChEBI" id="CHEBI:77657"/>
        <dbReference type="ChEBI" id="CHEBI:456216"/>
        <dbReference type="EC" id="6.3.2.6"/>
    </reaction>
</comment>
<comment type="pathway">
    <text evidence="1">Purine metabolism; IMP biosynthesis via de novo pathway; 5-amino-1-(5-phospho-D-ribosyl)imidazole-4-carboxamide from 5-amino-1-(5-phospho-D-ribosyl)imidazole-4-carboxylate: step 1/2.</text>
</comment>
<comment type="similarity">
    <text evidence="1">Belongs to the SAICAR synthetase family.</text>
</comment>
<sequence>MNAIKETRFELPGQTGFYKGKVRDVYYVADKLVVVASDRISAFDVVLPRAIPFKGQVLNQIAAKMLAQTADVVPNWILSVPDPSVSIGIKCEPFKVEMVIRGYLAGHAAREYKAGKRTLCGVALPEELKENDKLPAPIITPTTKADEGHDEDISREDLLARGIVSEADYIQLEKYTQALFQRGTELAEKQGLILVDTKYEFGKVGDKIYLIDEIHTPDSSRYFYIDGYAERQAKGEAQKQLSKEFVRQWLIENGFQGKEGQNVPVMTDEIVSSISERYIELYEKVIGESFKKPEESNPEERILKNILKAL</sequence>
<organism>
    <name type="scientific">Cytophaga hutchinsonii (strain ATCC 33406 / DSM 1761 / CIP 103989 / NBRC 15051 / NCIMB 9469 / D465)</name>
    <dbReference type="NCBI Taxonomy" id="269798"/>
    <lineage>
        <taxon>Bacteria</taxon>
        <taxon>Pseudomonadati</taxon>
        <taxon>Bacteroidota</taxon>
        <taxon>Cytophagia</taxon>
        <taxon>Cytophagales</taxon>
        <taxon>Cytophagaceae</taxon>
        <taxon>Cytophaga</taxon>
    </lineage>
</organism>